<sequence length="166" mass="18472">MMSSMALSSTSLCSSFISQHPKLSITASPPLFHTQTTKPISVKRKIITLAAPETLTAETVTGIDTSDNTPQQTIKVVKPDEKSRVVLKFVWMEKNIGLGLDQHVPGHGTIPLSPYFFWPRKDAWEELKSTLEAKPWISQKKMIILLNQATDIINLWQQSGGNLTSQ</sequence>
<reference key="1">
    <citation type="journal article" date="2000" name="Nature">
        <title>Sequence and analysis of chromosome 1 of the plant Arabidopsis thaliana.</title>
        <authorList>
            <person name="Theologis A."/>
            <person name="Ecker J.R."/>
            <person name="Palm C.J."/>
            <person name="Federspiel N.A."/>
            <person name="Kaul S."/>
            <person name="White O."/>
            <person name="Alonso J."/>
            <person name="Altafi H."/>
            <person name="Araujo R."/>
            <person name="Bowman C.L."/>
            <person name="Brooks S.Y."/>
            <person name="Buehler E."/>
            <person name="Chan A."/>
            <person name="Chao Q."/>
            <person name="Chen H."/>
            <person name="Cheuk R.F."/>
            <person name="Chin C.W."/>
            <person name="Chung M.K."/>
            <person name="Conn L."/>
            <person name="Conway A.B."/>
            <person name="Conway A.R."/>
            <person name="Creasy T.H."/>
            <person name="Dewar K."/>
            <person name="Dunn P."/>
            <person name="Etgu P."/>
            <person name="Feldblyum T.V."/>
            <person name="Feng J.-D."/>
            <person name="Fong B."/>
            <person name="Fujii C.Y."/>
            <person name="Gill J.E."/>
            <person name="Goldsmith A.D."/>
            <person name="Haas B."/>
            <person name="Hansen N.F."/>
            <person name="Hughes B."/>
            <person name="Huizar L."/>
            <person name="Hunter J.L."/>
            <person name="Jenkins J."/>
            <person name="Johnson-Hopson C."/>
            <person name="Khan S."/>
            <person name="Khaykin E."/>
            <person name="Kim C.J."/>
            <person name="Koo H.L."/>
            <person name="Kremenetskaia I."/>
            <person name="Kurtz D.B."/>
            <person name="Kwan A."/>
            <person name="Lam B."/>
            <person name="Langin-Hooper S."/>
            <person name="Lee A."/>
            <person name="Lee J.M."/>
            <person name="Lenz C.A."/>
            <person name="Li J.H."/>
            <person name="Li Y.-P."/>
            <person name="Lin X."/>
            <person name="Liu S.X."/>
            <person name="Liu Z.A."/>
            <person name="Luros J.S."/>
            <person name="Maiti R."/>
            <person name="Marziali A."/>
            <person name="Militscher J."/>
            <person name="Miranda M."/>
            <person name="Nguyen M."/>
            <person name="Nierman W.C."/>
            <person name="Osborne B.I."/>
            <person name="Pai G."/>
            <person name="Peterson J."/>
            <person name="Pham P.K."/>
            <person name="Rizzo M."/>
            <person name="Rooney T."/>
            <person name="Rowley D."/>
            <person name="Sakano H."/>
            <person name="Salzberg S.L."/>
            <person name="Schwartz J.R."/>
            <person name="Shinn P."/>
            <person name="Southwick A.M."/>
            <person name="Sun H."/>
            <person name="Tallon L.J."/>
            <person name="Tambunga G."/>
            <person name="Toriumi M.J."/>
            <person name="Town C.D."/>
            <person name="Utterback T."/>
            <person name="Van Aken S."/>
            <person name="Vaysberg M."/>
            <person name="Vysotskaia V.S."/>
            <person name="Walker M."/>
            <person name="Wu D."/>
            <person name="Yu G."/>
            <person name="Fraser C.M."/>
            <person name="Venter J.C."/>
            <person name="Davis R.W."/>
        </authorList>
    </citation>
    <scope>NUCLEOTIDE SEQUENCE [LARGE SCALE GENOMIC DNA]</scope>
    <source>
        <strain>cv. Columbia</strain>
    </source>
</reference>
<reference key="2">
    <citation type="journal article" date="2017" name="Plant J.">
        <title>Araport11: a complete reannotation of the Arabidopsis thaliana reference genome.</title>
        <authorList>
            <person name="Cheng C.Y."/>
            <person name="Krishnakumar V."/>
            <person name="Chan A.P."/>
            <person name="Thibaud-Nissen F."/>
            <person name="Schobel S."/>
            <person name="Town C.D."/>
        </authorList>
    </citation>
    <scope>GENOME REANNOTATION</scope>
    <source>
        <strain>cv. Columbia</strain>
    </source>
</reference>
<reference key="3">
    <citation type="journal article" date="2003" name="Science">
        <title>Empirical analysis of transcriptional activity in the Arabidopsis genome.</title>
        <authorList>
            <person name="Yamada K."/>
            <person name="Lim J."/>
            <person name="Dale J.M."/>
            <person name="Chen H."/>
            <person name="Shinn P."/>
            <person name="Palm C.J."/>
            <person name="Southwick A.M."/>
            <person name="Wu H.C."/>
            <person name="Kim C.J."/>
            <person name="Nguyen M."/>
            <person name="Pham P.K."/>
            <person name="Cheuk R.F."/>
            <person name="Karlin-Newmann G."/>
            <person name="Liu S.X."/>
            <person name="Lam B."/>
            <person name="Sakano H."/>
            <person name="Wu T."/>
            <person name="Yu G."/>
            <person name="Miranda M."/>
            <person name="Quach H.L."/>
            <person name="Tripp M."/>
            <person name="Chang C.H."/>
            <person name="Lee J.M."/>
            <person name="Toriumi M.J."/>
            <person name="Chan M.M."/>
            <person name="Tang C.C."/>
            <person name="Onodera C.S."/>
            <person name="Deng J.M."/>
            <person name="Akiyama K."/>
            <person name="Ansari Y."/>
            <person name="Arakawa T."/>
            <person name="Banh J."/>
            <person name="Banno F."/>
            <person name="Bowser L."/>
            <person name="Brooks S.Y."/>
            <person name="Carninci P."/>
            <person name="Chao Q."/>
            <person name="Choy N."/>
            <person name="Enju A."/>
            <person name="Goldsmith A.D."/>
            <person name="Gurjal M."/>
            <person name="Hansen N.F."/>
            <person name="Hayashizaki Y."/>
            <person name="Johnson-Hopson C."/>
            <person name="Hsuan V.W."/>
            <person name="Iida K."/>
            <person name="Karnes M."/>
            <person name="Khan S."/>
            <person name="Koesema E."/>
            <person name="Ishida J."/>
            <person name="Jiang P.X."/>
            <person name="Jones T."/>
            <person name="Kawai J."/>
            <person name="Kamiya A."/>
            <person name="Meyers C."/>
            <person name="Nakajima M."/>
            <person name="Narusaka M."/>
            <person name="Seki M."/>
            <person name="Sakurai T."/>
            <person name="Satou M."/>
            <person name="Tamse R."/>
            <person name="Vaysberg M."/>
            <person name="Wallender E.K."/>
            <person name="Wong C."/>
            <person name="Yamamura Y."/>
            <person name="Yuan S."/>
            <person name="Shinozaki K."/>
            <person name="Davis R.W."/>
            <person name="Theologis A."/>
            <person name="Ecker J.R."/>
        </authorList>
    </citation>
    <scope>NUCLEOTIDE SEQUENCE [LARGE SCALE MRNA]</scope>
    <source>
        <strain>cv. Columbia</strain>
    </source>
</reference>
<reference key="4">
    <citation type="submission" date="2002-03" db="EMBL/GenBank/DDBJ databases">
        <title>Full-length cDNA from Arabidopsis thaliana.</title>
        <authorList>
            <person name="Brover V.V."/>
            <person name="Troukhan M.E."/>
            <person name="Alexandrov N.A."/>
            <person name="Lu Y.-P."/>
            <person name="Flavell R.B."/>
            <person name="Feldmann K.A."/>
        </authorList>
    </citation>
    <scope>NUCLEOTIDE SEQUENCE [LARGE SCALE MRNA]</scope>
</reference>
<reference key="5">
    <citation type="journal article" date="2023" name="Plant Cell">
        <title>An updated nomenclature for plant ribosomal protein genes.</title>
        <authorList>
            <person name="Scarpin M.R."/>
            <person name="Busche M."/>
            <person name="Martinez R.E."/>
            <person name="Harper L.C."/>
            <person name="Reiser L."/>
            <person name="Szakonyi D."/>
            <person name="Merchante C."/>
            <person name="Lan T."/>
            <person name="Xiong W."/>
            <person name="Mo B."/>
            <person name="Tang G."/>
            <person name="Chen X."/>
            <person name="Bailey-Serres J."/>
            <person name="Browning K.S."/>
            <person name="Brunkard J.O."/>
        </authorList>
    </citation>
    <scope>NOMENCLATURE</scope>
</reference>
<comment type="function">
    <text evidence="1">Component of the chloroplast ribosome (chloro-ribosome), a dedicated translation machinery responsible for the synthesis of chloroplast genome-encoded proteins, including proteins of the transcription and translation machinery and components of the photosynthetic apparatus.</text>
</comment>
<comment type="subunit">
    <text evidence="1">Part of the 30S ribosomal subunit.</text>
</comment>
<comment type="interaction">
    <interactant intactId="EBI-4424705">
        <id>Q9SX22</id>
    </interactant>
    <interactant intactId="EBI-1536925">
        <id>Q9FYK5</id>
        <label>ESR2</label>
    </interactant>
    <organismsDiffer>false</organismsDiffer>
    <experiments>3</experiments>
</comment>
<comment type="interaction">
    <interactant intactId="EBI-4424705">
        <id>Q9SX22</id>
    </interactant>
    <interactant intactId="EBI-25513208">
        <id>Q39101</id>
        <label>FER1</label>
    </interactant>
    <organismsDiffer>false</organismsDiffer>
    <experiments>3</experiments>
</comment>
<comment type="subcellular location">
    <subcellularLocation>
        <location evidence="1">Plastid</location>
        <location evidence="1">Chloroplast</location>
    </subcellularLocation>
</comment>
<comment type="alternative products">
    <event type="alternative splicing"/>
    <isoform>
        <id>Q9SX22-1</id>
        <name>1</name>
        <sequence type="displayed"/>
    </isoform>
    <text>A number of isoforms are produced. According to EST sequences.</text>
</comment>
<comment type="similarity">
    <text evidence="4">Belongs to the chloroplast-specific ribosomal protein cS23 family.</text>
</comment>
<proteinExistence type="evidence at protein level"/>
<gene>
    <name type="ordered locus">At1g68590</name>
    <name type="ORF">F24J5.17</name>
</gene>
<name>RRP31_ARATH</name>
<protein>
    <recommendedName>
        <fullName evidence="3">Small ribosomal subunit protein cS23z</fullName>
    </recommendedName>
    <alternativeName>
        <fullName>30S ribosomal protein 3-1, chloroplastic</fullName>
    </alternativeName>
    <alternativeName>
        <fullName>Plastid-specific 30S ribosomal protein 3-1</fullName>
        <shortName>PSRP-3 1</shortName>
    </alternativeName>
</protein>
<dbReference type="EMBL" id="AC008075">
    <property type="protein sequence ID" value="AAD49984.1"/>
    <property type="molecule type" value="Genomic_DNA"/>
</dbReference>
<dbReference type="EMBL" id="CP002684">
    <property type="protein sequence ID" value="AEE34816.1"/>
    <property type="molecule type" value="Genomic_DNA"/>
</dbReference>
<dbReference type="EMBL" id="BT003990">
    <property type="protein sequence ID" value="AAO42029.1"/>
    <property type="molecule type" value="mRNA"/>
</dbReference>
<dbReference type="EMBL" id="BT005090">
    <property type="protein sequence ID" value="AAO50623.1"/>
    <property type="molecule type" value="mRNA"/>
</dbReference>
<dbReference type="EMBL" id="AY086145">
    <property type="protein sequence ID" value="AAM63350.1"/>
    <property type="molecule type" value="mRNA"/>
</dbReference>
<dbReference type="PIR" id="C96710">
    <property type="entry name" value="C96710"/>
</dbReference>
<dbReference type="RefSeq" id="NP_564934.1">
    <molecule id="Q9SX22-1"/>
    <property type="nucleotide sequence ID" value="NM_105531.4"/>
</dbReference>
<dbReference type="SMR" id="Q9SX22"/>
<dbReference type="BioGRID" id="28410">
    <property type="interactions" value="4"/>
</dbReference>
<dbReference type="FunCoup" id="Q9SX22">
    <property type="interactions" value="1473"/>
</dbReference>
<dbReference type="IntAct" id="Q9SX22">
    <property type="interactions" value="3"/>
</dbReference>
<dbReference type="STRING" id="3702.Q9SX22"/>
<dbReference type="PaxDb" id="3702-AT1G68590.1"/>
<dbReference type="EnsemblPlants" id="AT1G68590.1">
    <molecule id="Q9SX22-1"/>
    <property type="protein sequence ID" value="AT1G68590.1"/>
    <property type="gene ID" value="AT1G68590"/>
</dbReference>
<dbReference type="GeneID" id="843189"/>
<dbReference type="Gramene" id="AT1G68590.1">
    <molecule id="Q9SX22-1"/>
    <property type="protein sequence ID" value="AT1G68590.1"/>
    <property type="gene ID" value="AT1G68590"/>
</dbReference>
<dbReference type="KEGG" id="ath:AT1G68590"/>
<dbReference type="Araport" id="AT1G68590"/>
<dbReference type="TAIR" id="AT1G68590">
    <property type="gene designation" value="PSRP3/1"/>
</dbReference>
<dbReference type="eggNOG" id="ENOG502S13Q">
    <property type="taxonomic scope" value="Eukaryota"/>
</dbReference>
<dbReference type="InParanoid" id="Q9SX22"/>
<dbReference type="OrthoDB" id="1918956at2759"/>
<dbReference type="PhylomeDB" id="Q9SX22"/>
<dbReference type="PRO" id="PR:Q9SX22"/>
<dbReference type="Proteomes" id="UP000006548">
    <property type="component" value="Chromosome 1"/>
</dbReference>
<dbReference type="ExpressionAtlas" id="Q9SX22">
    <property type="expression patterns" value="baseline and differential"/>
</dbReference>
<dbReference type="GO" id="GO:0009507">
    <property type="term" value="C:chloroplast"/>
    <property type="evidence" value="ECO:0000314"/>
    <property type="project" value="TAIR"/>
</dbReference>
<dbReference type="GO" id="GO:0009570">
    <property type="term" value="C:chloroplast stroma"/>
    <property type="evidence" value="ECO:0007005"/>
    <property type="project" value="TAIR"/>
</dbReference>
<dbReference type="GO" id="GO:0009535">
    <property type="term" value="C:chloroplast thylakoid membrane"/>
    <property type="evidence" value="ECO:0007005"/>
    <property type="project" value="TAIR"/>
</dbReference>
<dbReference type="GO" id="GO:0005739">
    <property type="term" value="C:mitochondrion"/>
    <property type="evidence" value="ECO:0007005"/>
    <property type="project" value="TAIR"/>
</dbReference>
<dbReference type="GO" id="GO:1990904">
    <property type="term" value="C:ribonucleoprotein complex"/>
    <property type="evidence" value="ECO:0007669"/>
    <property type="project" value="UniProtKB-KW"/>
</dbReference>
<dbReference type="GO" id="GO:0005840">
    <property type="term" value="C:ribosome"/>
    <property type="evidence" value="ECO:0007669"/>
    <property type="project" value="UniProtKB-KW"/>
</dbReference>
<dbReference type="GO" id="GO:0009579">
    <property type="term" value="C:thylakoid"/>
    <property type="evidence" value="ECO:0007005"/>
    <property type="project" value="TAIR"/>
</dbReference>
<dbReference type="GO" id="GO:0003735">
    <property type="term" value="F:structural constituent of ribosome"/>
    <property type="evidence" value="ECO:0007669"/>
    <property type="project" value="InterPro"/>
</dbReference>
<dbReference type="GO" id="GO:0032544">
    <property type="term" value="P:plastid translation"/>
    <property type="evidence" value="ECO:0000315"/>
    <property type="project" value="TAIR"/>
</dbReference>
<dbReference type="FunFam" id="3.30.390.140:FF:000001">
    <property type="entry name" value="Ribosomal protein PSRP-3/Ycf65"/>
    <property type="match status" value="1"/>
</dbReference>
<dbReference type="Gene3D" id="3.30.390.140">
    <property type="match status" value="1"/>
</dbReference>
<dbReference type="InterPro" id="IPR038447">
    <property type="entry name" value="PSRP-3/Ycf65_sf"/>
</dbReference>
<dbReference type="InterPro" id="IPR006924">
    <property type="entry name" value="Ribosomal_PSRP3/Ycf65"/>
</dbReference>
<dbReference type="PANTHER" id="PTHR35108">
    <property type="entry name" value="30S RIBOSOMAL PROTEIN 3, CHLOROPLASTIC"/>
    <property type="match status" value="1"/>
</dbReference>
<dbReference type="PANTHER" id="PTHR35108:SF13">
    <property type="entry name" value="SMALL RIBOSOMAL SUBUNIT PROTEIN CS23Z"/>
    <property type="match status" value="1"/>
</dbReference>
<dbReference type="Pfam" id="PF04839">
    <property type="entry name" value="PSRP-3_Ycf65"/>
    <property type="match status" value="1"/>
</dbReference>
<feature type="transit peptide" description="Chloroplast" evidence="2">
    <location>
        <begin position="1"/>
        <end status="unknown"/>
    </location>
</feature>
<feature type="chain" id="PRO_0000041522" description="Small ribosomal subunit protein cS23z">
    <location>
        <begin status="unknown"/>
        <end position="166"/>
    </location>
</feature>
<feature type="sequence conflict" description="In Ref. 4; AAM63350." evidence="4" ref="4">
    <original>I</original>
    <variation>T</variation>
    <location>
        <position position="74"/>
    </location>
</feature>
<evidence type="ECO:0000250" key="1">
    <source>
        <dbReference type="UniProtKB" id="P82412"/>
    </source>
</evidence>
<evidence type="ECO:0000255" key="2"/>
<evidence type="ECO:0000303" key="3">
    <source>
    </source>
</evidence>
<evidence type="ECO:0000305" key="4"/>
<keyword id="KW-0025">Alternative splicing</keyword>
<keyword id="KW-0150">Chloroplast</keyword>
<keyword id="KW-0934">Plastid</keyword>
<keyword id="KW-1185">Reference proteome</keyword>
<keyword id="KW-0687">Ribonucleoprotein</keyword>
<keyword id="KW-0689">Ribosomal protein</keyword>
<keyword id="KW-0809">Transit peptide</keyword>
<organism>
    <name type="scientific">Arabidopsis thaliana</name>
    <name type="common">Mouse-ear cress</name>
    <dbReference type="NCBI Taxonomy" id="3702"/>
    <lineage>
        <taxon>Eukaryota</taxon>
        <taxon>Viridiplantae</taxon>
        <taxon>Streptophyta</taxon>
        <taxon>Embryophyta</taxon>
        <taxon>Tracheophyta</taxon>
        <taxon>Spermatophyta</taxon>
        <taxon>Magnoliopsida</taxon>
        <taxon>eudicotyledons</taxon>
        <taxon>Gunneridae</taxon>
        <taxon>Pentapetalae</taxon>
        <taxon>rosids</taxon>
        <taxon>malvids</taxon>
        <taxon>Brassicales</taxon>
        <taxon>Brassicaceae</taxon>
        <taxon>Camelineae</taxon>
        <taxon>Arabidopsis</taxon>
    </lineage>
</organism>
<accession>Q9SX22</accession>
<accession>Q8LD87</accession>